<reference key="1">
    <citation type="journal article" date="2009" name="Environ. Microbiol.">
        <title>Genome sequence of Desulfobacterium autotrophicum HRM2, a marine sulfate reducer oxidizing organic carbon completely to carbon dioxide.</title>
        <authorList>
            <person name="Strittmatter A.W."/>
            <person name="Liesegang H."/>
            <person name="Rabus R."/>
            <person name="Decker I."/>
            <person name="Amann J."/>
            <person name="Andres S."/>
            <person name="Henne A."/>
            <person name="Fricke W.F."/>
            <person name="Martinez-Arias R."/>
            <person name="Bartels D."/>
            <person name="Goesmann A."/>
            <person name="Krause L."/>
            <person name="Puehler A."/>
            <person name="Klenk H.P."/>
            <person name="Richter M."/>
            <person name="Schuler M."/>
            <person name="Gloeckner F.O."/>
            <person name="Meyerdierks A."/>
            <person name="Gottschalk G."/>
            <person name="Amann R."/>
        </authorList>
    </citation>
    <scope>NUCLEOTIDE SEQUENCE [LARGE SCALE GENOMIC DNA]</scope>
    <source>
        <strain>ATCC 43914 / DSM 3382 / VKM B-1955 / HRM2</strain>
    </source>
</reference>
<organism>
    <name type="scientific">Desulforapulum autotrophicum (strain ATCC 43914 / DSM 3382 / VKM B-1955 / HRM2)</name>
    <name type="common">Desulfobacterium autotrophicum</name>
    <dbReference type="NCBI Taxonomy" id="177437"/>
    <lineage>
        <taxon>Bacteria</taxon>
        <taxon>Pseudomonadati</taxon>
        <taxon>Thermodesulfobacteriota</taxon>
        <taxon>Desulfobacteria</taxon>
        <taxon>Desulfobacterales</taxon>
        <taxon>Desulfobacteraceae</taxon>
        <taxon>Desulforapulum</taxon>
    </lineage>
</organism>
<gene>
    <name evidence="1" type="primary">rpsD</name>
    <name type="ordered locus">HRM2_36010</name>
</gene>
<feature type="chain" id="PRO_1000214284" description="Small ribosomal subunit protein uS4">
    <location>
        <begin position="1"/>
        <end position="208"/>
    </location>
</feature>
<feature type="domain" description="S4 RNA-binding" evidence="1">
    <location>
        <begin position="98"/>
        <end position="168"/>
    </location>
</feature>
<protein>
    <recommendedName>
        <fullName evidence="1">Small ribosomal subunit protein uS4</fullName>
    </recommendedName>
    <alternativeName>
        <fullName evidence="2">30S ribosomal protein S4</fullName>
    </alternativeName>
</protein>
<comment type="function">
    <text evidence="1">One of the primary rRNA binding proteins, it binds directly to 16S rRNA where it nucleates assembly of the body of the 30S subunit.</text>
</comment>
<comment type="function">
    <text evidence="1">With S5 and S12 plays an important role in translational accuracy.</text>
</comment>
<comment type="subunit">
    <text evidence="1">Part of the 30S ribosomal subunit. Contacts protein S5. The interaction surface between S4 and S5 is involved in control of translational fidelity.</text>
</comment>
<comment type="similarity">
    <text evidence="1">Belongs to the universal ribosomal protein uS4 family.</text>
</comment>
<evidence type="ECO:0000255" key="1">
    <source>
        <dbReference type="HAMAP-Rule" id="MF_01306"/>
    </source>
</evidence>
<evidence type="ECO:0000305" key="2"/>
<accession>C0Q9U8</accession>
<name>RS4_DESAH</name>
<keyword id="KW-1185">Reference proteome</keyword>
<keyword id="KW-0687">Ribonucleoprotein</keyword>
<keyword id="KW-0689">Ribosomal protein</keyword>
<keyword id="KW-0694">RNA-binding</keyword>
<keyword id="KW-0699">rRNA-binding</keyword>
<proteinExistence type="inferred from homology"/>
<sequence>MSRYRGSVCRQCRRENMKLFLKGDRCFSDKCSFDRRSYPPGQHGQRRMKHSDYGIQLREKQKVRRIYGIGEKQFRIIFKKADSLKGITGETLLSLLERRLDNVVFRLGFTSSRTQGRHFVRHNHFTVNGKKVNIPSYIIKAGDVVELKEKSKKVQAITDSLDTVVRRGVPQWLELDKDGFKGVVKGMPAREDITLPIQEQLIVELYSK</sequence>
<dbReference type="EMBL" id="CP001087">
    <property type="protein sequence ID" value="ACN16666.1"/>
    <property type="molecule type" value="Genomic_DNA"/>
</dbReference>
<dbReference type="RefSeq" id="WP_015905416.1">
    <property type="nucleotide sequence ID" value="NC_012108.1"/>
</dbReference>
<dbReference type="SMR" id="C0Q9U8"/>
<dbReference type="STRING" id="177437.HRM2_36010"/>
<dbReference type="KEGG" id="dat:HRM2_36010"/>
<dbReference type="eggNOG" id="COG0522">
    <property type="taxonomic scope" value="Bacteria"/>
</dbReference>
<dbReference type="HOGENOM" id="CLU_092403_0_2_7"/>
<dbReference type="OrthoDB" id="9803672at2"/>
<dbReference type="Proteomes" id="UP000000442">
    <property type="component" value="Chromosome"/>
</dbReference>
<dbReference type="GO" id="GO:0015935">
    <property type="term" value="C:small ribosomal subunit"/>
    <property type="evidence" value="ECO:0007669"/>
    <property type="project" value="InterPro"/>
</dbReference>
<dbReference type="GO" id="GO:0019843">
    <property type="term" value="F:rRNA binding"/>
    <property type="evidence" value="ECO:0007669"/>
    <property type="project" value="UniProtKB-UniRule"/>
</dbReference>
<dbReference type="GO" id="GO:0003735">
    <property type="term" value="F:structural constituent of ribosome"/>
    <property type="evidence" value="ECO:0007669"/>
    <property type="project" value="InterPro"/>
</dbReference>
<dbReference type="GO" id="GO:0042274">
    <property type="term" value="P:ribosomal small subunit biogenesis"/>
    <property type="evidence" value="ECO:0007669"/>
    <property type="project" value="TreeGrafter"/>
</dbReference>
<dbReference type="GO" id="GO:0006412">
    <property type="term" value="P:translation"/>
    <property type="evidence" value="ECO:0007669"/>
    <property type="project" value="UniProtKB-UniRule"/>
</dbReference>
<dbReference type="CDD" id="cd00165">
    <property type="entry name" value="S4"/>
    <property type="match status" value="1"/>
</dbReference>
<dbReference type="FunFam" id="1.10.1050.10:FF:000001">
    <property type="entry name" value="30S ribosomal protein S4"/>
    <property type="match status" value="1"/>
</dbReference>
<dbReference type="FunFam" id="3.10.290.10:FF:000001">
    <property type="entry name" value="30S ribosomal protein S4"/>
    <property type="match status" value="1"/>
</dbReference>
<dbReference type="Gene3D" id="1.10.1050.10">
    <property type="entry name" value="Ribosomal Protein S4 Delta 41, Chain A, domain 1"/>
    <property type="match status" value="1"/>
</dbReference>
<dbReference type="Gene3D" id="3.10.290.10">
    <property type="entry name" value="RNA-binding S4 domain"/>
    <property type="match status" value="1"/>
</dbReference>
<dbReference type="HAMAP" id="MF_01306_B">
    <property type="entry name" value="Ribosomal_uS4_B"/>
    <property type="match status" value="1"/>
</dbReference>
<dbReference type="InterPro" id="IPR022801">
    <property type="entry name" value="Ribosomal_uS4"/>
</dbReference>
<dbReference type="InterPro" id="IPR005709">
    <property type="entry name" value="Ribosomal_uS4_bac-type"/>
</dbReference>
<dbReference type="InterPro" id="IPR001912">
    <property type="entry name" value="Ribosomal_uS4_N"/>
</dbReference>
<dbReference type="InterPro" id="IPR002942">
    <property type="entry name" value="S4_RNA-bd"/>
</dbReference>
<dbReference type="InterPro" id="IPR036986">
    <property type="entry name" value="S4_RNA-bd_sf"/>
</dbReference>
<dbReference type="NCBIfam" id="NF003717">
    <property type="entry name" value="PRK05327.1"/>
    <property type="match status" value="1"/>
</dbReference>
<dbReference type="NCBIfam" id="TIGR01017">
    <property type="entry name" value="rpsD_bact"/>
    <property type="match status" value="1"/>
</dbReference>
<dbReference type="PANTHER" id="PTHR11831">
    <property type="entry name" value="30S 40S RIBOSOMAL PROTEIN"/>
    <property type="match status" value="1"/>
</dbReference>
<dbReference type="PANTHER" id="PTHR11831:SF4">
    <property type="entry name" value="SMALL RIBOSOMAL SUBUNIT PROTEIN US4M"/>
    <property type="match status" value="1"/>
</dbReference>
<dbReference type="Pfam" id="PF00163">
    <property type="entry name" value="Ribosomal_S4"/>
    <property type="match status" value="1"/>
</dbReference>
<dbReference type="Pfam" id="PF01479">
    <property type="entry name" value="S4"/>
    <property type="match status" value="1"/>
</dbReference>
<dbReference type="SMART" id="SM01390">
    <property type="entry name" value="Ribosomal_S4"/>
    <property type="match status" value="1"/>
</dbReference>
<dbReference type="SMART" id="SM00363">
    <property type="entry name" value="S4"/>
    <property type="match status" value="1"/>
</dbReference>
<dbReference type="SUPFAM" id="SSF55174">
    <property type="entry name" value="Alpha-L RNA-binding motif"/>
    <property type="match status" value="1"/>
</dbReference>
<dbReference type="PROSITE" id="PS50889">
    <property type="entry name" value="S4"/>
    <property type="match status" value="1"/>
</dbReference>